<organism>
    <name type="scientific">Arabidopsis thaliana</name>
    <name type="common">Mouse-ear cress</name>
    <dbReference type="NCBI Taxonomy" id="3702"/>
    <lineage>
        <taxon>Eukaryota</taxon>
        <taxon>Viridiplantae</taxon>
        <taxon>Streptophyta</taxon>
        <taxon>Embryophyta</taxon>
        <taxon>Tracheophyta</taxon>
        <taxon>Spermatophyta</taxon>
        <taxon>Magnoliopsida</taxon>
        <taxon>eudicotyledons</taxon>
        <taxon>Gunneridae</taxon>
        <taxon>Pentapetalae</taxon>
        <taxon>rosids</taxon>
        <taxon>malvids</taxon>
        <taxon>Brassicales</taxon>
        <taxon>Brassicaceae</taxon>
        <taxon>Camelineae</taxon>
        <taxon>Arabidopsis</taxon>
    </lineage>
</organism>
<keyword id="KW-0931">ER-Golgi transport</keyword>
<keyword id="KW-0333">Golgi apparatus</keyword>
<keyword id="KW-0342">GTP-binding</keyword>
<keyword id="KW-0449">Lipoprotein</keyword>
<keyword id="KW-0472">Membrane</keyword>
<keyword id="KW-0547">Nucleotide-binding</keyword>
<keyword id="KW-0636">Prenylation</keyword>
<keyword id="KW-0653">Protein transport</keyword>
<keyword id="KW-1185">Reference proteome</keyword>
<keyword id="KW-0813">Transport</keyword>
<gene>
    <name type="primary">RABD2A</name>
    <name type="synonym">ARA-5</name>
    <name type="synonym">RAB1B</name>
    <name type="ordered locus">At1g02130</name>
    <name type="ORF">T7I23.6</name>
</gene>
<accession>P28188</accession>
<accession>Q940Z7</accession>
<reference key="1">
    <citation type="journal article" date="2000" name="Nature">
        <title>Sequence and analysis of chromosome 1 of the plant Arabidopsis thaliana.</title>
        <authorList>
            <person name="Theologis A."/>
            <person name="Ecker J.R."/>
            <person name="Palm C.J."/>
            <person name="Federspiel N.A."/>
            <person name="Kaul S."/>
            <person name="White O."/>
            <person name="Alonso J."/>
            <person name="Altafi H."/>
            <person name="Araujo R."/>
            <person name="Bowman C.L."/>
            <person name="Brooks S.Y."/>
            <person name="Buehler E."/>
            <person name="Chan A."/>
            <person name="Chao Q."/>
            <person name="Chen H."/>
            <person name="Cheuk R.F."/>
            <person name="Chin C.W."/>
            <person name="Chung M.K."/>
            <person name="Conn L."/>
            <person name="Conway A.B."/>
            <person name="Conway A.R."/>
            <person name="Creasy T.H."/>
            <person name="Dewar K."/>
            <person name="Dunn P."/>
            <person name="Etgu P."/>
            <person name="Feldblyum T.V."/>
            <person name="Feng J.-D."/>
            <person name="Fong B."/>
            <person name="Fujii C.Y."/>
            <person name="Gill J.E."/>
            <person name="Goldsmith A.D."/>
            <person name="Haas B."/>
            <person name="Hansen N.F."/>
            <person name="Hughes B."/>
            <person name="Huizar L."/>
            <person name="Hunter J.L."/>
            <person name="Jenkins J."/>
            <person name="Johnson-Hopson C."/>
            <person name="Khan S."/>
            <person name="Khaykin E."/>
            <person name="Kim C.J."/>
            <person name="Koo H.L."/>
            <person name="Kremenetskaia I."/>
            <person name="Kurtz D.B."/>
            <person name="Kwan A."/>
            <person name="Lam B."/>
            <person name="Langin-Hooper S."/>
            <person name="Lee A."/>
            <person name="Lee J.M."/>
            <person name="Lenz C.A."/>
            <person name="Li J.H."/>
            <person name="Li Y.-P."/>
            <person name="Lin X."/>
            <person name="Liu S.X."/>
            <person name="Liu Z.A."/>
            <person name="Luros J.S."/>
            <person name="Maiti R."/>
            <person name="Marziali A."/>
            <person name="Militscher J."/>
            <person name="Miranda M."/>
            <person name="Nguyen M."/>
            <person name="Nierman W.C."/>
            <person name="Osborne B.I."/>
            <person name="Pai G."/>
            <person name="Peterson J."/>
            <person name="Pham P.K."/>
            <person name="Rizzo M."/>
            <person name="Rooney T."/>
            <person name="Rowley D."/>
            <person name="Sakano H."/>
            <person name="Salzberg S.L."/>
            <person name="Schwartz J.R."/>
            <person name="Shinn P."/>
            <person name="Southwick A.M."/>
            <person name="Sun H."/>
            <person name="Tallon L.J."/>
            <person name="Tambunga G."/>
            <person name="Toriumi M.J."/>
            <person name="Town C.D."/>
            <person name="Utterback T."/>
            <person name="Van Aken S."/>
            <person name="Vaysberg M."/>
            <person name="Vysotskaia V.S."/>
            <person name="Walker M."/>
            <person name="Wu D."/>
            <person name="Yu G."/>
            <person name="Fraser C.M."/>
            <person name="Venter J.C."/>
            <person name="Davis R.W."/>
        </authorList>
    </citation>
    <scope>NUCLEOTIDE SEQUENCE [LARGE SCALE GENOMIC DNA]</scope>
    <source>
        <strain>cv. Columbia</strain>
    </source>
</reference>
<reference key="2">
    <citation type="journal article" date="2017" name="Plant J.">
        <title>Araport11: a complete reannotation of the Arabidopsis thaliana reference genome.</title>
        <authorList>
            <person name="Cheng C.Y."/>
            <person name="Krishnakumar V."/>
            <person name="Chan A.P."/>
            <person name="Thibaud-Nissen F."/>
            <person name="Schobel S."/>
            <person name="Town C.D."/>
        </authorList>
    </citation>
    <scope>GENOME REANNOTATION</scope>
    <source>
        <strain>cv. Columbia</strain>
    </source>
</reference>
<reference key="3">
    <citation type="journal article" date="2003" name="Science">
        <title>Empirical analysis of transcriptional activity in the Arabidopsis genome.</title>
        <authorList>
            <person name="Yamada K."/>
            <person name="Lim J."/>
            <person name="Dale J.M."/>
            <person name="Chen H."/>
            <person name="Shinn P."/>
            <person name="Palm C.J."/>
            <person name="Southwick A.M."/>
            <person name="Wu H.C."/>
            <person name="Kim C.J."/>
            <person name="Nguyen M."/>
            <person name="Pham P.K."/>
            <person name="Cheuk R.F."/>
            <person name="Karlin-Newmann G."/>
            <person name="Liu S.X."/>
            <person name="Lam B."/>
            <person name="Sakano H."/>
            <person name="Wu T."/>
            <person name="Yu G."/>
            <person name="Miranda M."/>
            <person name="Quach H.L."/>
            <person name="Tripp M."/>
            <person name="Chang C.H."/>
            <person name="Lee J.M."/>
            <person name="Toriumi M.J."/>
            <person name="Chan M.M."/>
            <person name="Tang C.C."/>
            <person name="Onodera C.S."/>
            <person name="Deng J.M."/>
            <person name="Akiyama K."/>
            <person name="Ansari Y."/>
            <person name="Arakawa T."/>
            <person name="Banh J."/>
            <person name="Banno F."/>
            <person name="Bowser L."/>
            <person name="Brooks S.Y."/>
            <person name="Carninci P."/>
            <person name="Chao Q."/>
            <person name="Choy N."/>
            <person name="Enju A."/>
            <person name="Goldsmith A.D."/>
            <person name="Gurjal M."/>
            <person name="Hansen N.F."/>
            <person name="Hayashizaki Y."/>
            <person name="Johnson-Hopson C."/>
            <person name="Hsuan V.W."/>
            <person name="Iida K."/>
            <person name="Karnes M."/>
            <person name="Khan S."/>
            <person name="Koesema E."/>
            <person name="Ishida J."/>
            <person name="Jiang P.X."/>
            <person name="Jones T."/>
            <person name="Kawai J."/>
            <person name="Kamiya A."/>
            <person name="Meyers C."/>
            <person name="Nakajima M."/>
            <person name="Narusaka M."/>
            <person name="Seki M."/>
            <person name="Sakurai T."/>
            <person name="Satou M."/>
            <person name="Tamse R."/>
            <person name="Vaysberg M."/>
            <person name="Wallender E.K."/>
            <person name="Wong C."/>
            <person name="Yamamura Y."/>
            <person name="Yuan S."/>
            <person name="Shinozaki K."/>
            <person name="Davis R.W."/>
            <person name="Theologis A."/>
            <person name="Ecker J.R."/>
        </authorList>
    </citation>
    <scope>NUCLEOTIDE SEQUENCE [LARGE SCALE MRNA]</scope>
    <source>
        <strain>cv. Columbia</strain>
    </source>
</reference>
<reference key="4">
    <citation type="journal article" date="1991" name="Gene">
        <title>Isolation and analysis of cDNAs encoding small GTP-binding proteins of Arabidopsis thaliana.</title>
        <authorList>
            <person name="Anai T."/>
            <person name="Hasegawa K."/>
            <person name="Watanabe Y."/>
            <person name="Uchimiya H."/>
            <person name="Ishizaki R."/>
            <person name="Matsui M."/>
        </authorList>
    </citation>
    <scope>NUCLEOTIDE SEQUENCE [MRNA] OF 9-203</scope>
    <source>
        <strain>cv. Columbia</strain>
        <strain>cv. En-1</strain>
        <strain>cv. Est</strain>
        <strain>cv. Landsberg erecta</strain>
        <strain>cv. Lapalmam</strain>
        <tissue>Leaf</tissue>
    </source>
</reference>
<reference key="5">
    <citation type="journal article" date="2000" name="Plant Cell">
        <title>A rab1 GTPase is required for transport between the endoplasmic reticulum and Golgi apparatus and for normal Golgi movement in plants.</title>
        <authorList>
            <person name="Batoko H."/>
            <person name="Zheng H.-Q."/>
            <person name="Hawes C."/>
            <person name="Moore I."/>
        </authorList>
    </citation>
    <scope>FUNCTION</scope>
    <scope>MUTAGENESIS OF ASN-121</scope>
</reference>
<reference key="6">
    <citation type="journal article" date="2002" name="Plant J.">
        <title>Redistribution of membrane proteins between the Golgi apparatus and endoplasmic reticulum in plants is reversible and not dependent on cytoskeletal networks.</title>
        <authorList>
            <person name="Saint-Jore C.M."/>
            <person name="Evins J."/>
            <person name="Batoko H."/>
            <person name="Brandizzi F."/>
            <person name="Moore I."/>
            <person name="Hawes C."/>
        </authorList>
    </citation>
    <scope>FUNCTION</scope>
</reference>
<reference key="7">
    <citation type="journal article" date="2003" name="Plant Physiol.">
        <title>Analysis of the small GTPase gene superfamily of Arabidopsis.</title>
        <authorList>
            <person name="Vernoud V."/>
            <person name="Horton A.C."/>
            <person name="Yang Z."/>
            <person name="Nielsen E."/>
        </authorList>
    </citation>
    <scope>GENE FAMILY</scope>
    <scope>NOMENCLATURE</scope>
</reference>
<reference key="8">
    <citation type="journal article" date="2007" name="J. Exp. Bot.">
        <title>Localization and domain characterization of Arabidopsis golgin candidates.</title>
        <authorList>
            <person name="Latijnhouwers M."/>
            <person name="Gillespie T."/>
            <person name="Boevink P."/>
            <person name="Kriechbaumer V."/>
            <person name="Hawes C."/>
            <person name="Carvalho C.M."/>
        </authorList>
    </citation>
    <scope>INTERACTION WITH GC5</scope>
</reference>
<reference key="9">
    <citation type="journal article" date="2009" name="J. Cell Sci.">
        <title>Genetic evidence that the higher plant Rab-D1 and Rab-D2 GTPases exhibit distinct but overlapping interactions in the early secretory pathway.</title>
        <authorList>
            <person name="Pinheiro H."/>
            <person name="Samalova M."/>
            <person name="Geldner N."/>
            <person name="Chory J."/>
            <person name="Martinez A."/>
            <person name="Moore I."/>
        </authorList>
    </citation>
    <scope>SUBCELLULAR LOCATION</scope>
</reference>
<proteinExistence type="evidence at protein level"/>
<comment type="function">
    <text evidence="4 5">Protein transport. Regulator of membrane traffic from the Golgi apparatus towards the endoplasmic reticulum (ER).</text>
</comment>
<comment type="subunit">
    <text>Does not interact with GC5.</text>
</comment>
<comment type="subcellular location">
    <subcellularLocation>
        <location evidence="6">Golgi apparatus</location>
        <location evidence="6">trans-Golgi network membrane</location>
    </subcellularLocation>
    <subcellularLocation>
        <location evidence="8">Golgi apparatus membrane</location>
        <topology evidence="8">Lipid-anchor</topology>
    </subcellularLocation>
</comment>
<comment type="similarity">
    <text evidence="7">Belongs to the small GTPase superfamily. Rab family.</text>
</comment>
<comment type="sequence caution" evidence="7">
    <conflict type="erroneous gene model prediction">
        <sequence resource="EMBL-CDS" id="AAC24370"/>
    </conflict>
</comment>
<sequence length="203" mass="22648">MNPEYDYLFKLLLIGDSGVGKSCLLLRFSDDSYVESYISTIGVDFKIRTVEQDGKTIKLQIWDTAGQERFRTITSSYYRGAHGIIIVYDVTDEESFNNVKQWLSEIDRYASDNVNKLLVGNKSDLTENRAIPYETAKAFADEIGIPFMETSAKDATNVEQAFMAMSASIKERMASQPAGNNARPPTVQIRGQPVAQKNGCCST</sequence>
<evidence type="ECO:0000250" key="1"/>
<evidence type="ECO:0000250" key="2">
    <source>
        <dbReference type="UniProtKB" id="P62820"/>
    </source>
</evidence>
<evidence type="ECO:0000256" key="3">
    <source>
        <dbReference type="SAM" id="MobiDB-lite"/>
    </source>
</evidence>
<evidence type="ECO:0000269" key="4">
    <source>
    </source>
</evidence>
<evidence type="ECO:0000269" key="5">
    <source>
    </source>
</evidence>
<evidence type="ECO:0000269" key="6">
    <source>
    </source>
</evidence>
<evidence type="ECO:0000305" key="7"/>
<evidence type="ECO:0000305" key="8">
    <source>
    </source>
</evidence>
<protein>
    <recommendedName>
        <fullName>Ras-related protein RABD2a</fullName>
        <shortName>AtRABD2a</shortName>
    </recommendedName>
    <alternativeName>
        <fullName>Ras-related protein Ara-5</fullName>
    </alternativeName>
    <alternativeName>
        <fullName>Ras-related protein Rab1B</fullName>
        <shortName>AtRab1B</shortName>
    </alternativeName>
</protein>
<feature type="chain" id="PRO_0000121292" description="Ras-related protein RABD2a">
    <location>
        <begin position="1"/>
        <end position="203"/>
    </location>
</feature>
<feature type="region of interest" description="Disordered" evidence="3">
    <location>
        <begin position="176"/>
        <end position="203"/>
    </location>
</feature>
<feature type="short sequence motif" description="Effector region" evidence="1">
    <location>
        <begin position="37"/>
        <end position="45"/>
    </location>
</feature>
<feature type="binding site" evidence="2">
    <location>
        <begin position="15"/>
        <end position="23"/>
    </location>
    <ligand>
        <name>GTP</name>
        <dbReference type="ChEBI" id="CHEBI:37565"/>
    </ligand>
</feature>
<feature type="binding site" evidence="2">
    <location>
        <begin position="33"/>
        <end position="40"/>
    </location>
    <ligand>
        <name>GTP</name>
        <dbReference type="ChEBI" id="CHEBI:37565"/>
    </ligand>
</feature>
<feature type="binding site" evidence="2">
    <location>
        <begin position="63"/>
        <end position="67"/>
    </location>
    <ligand>
        <name>GTP</name>
        <dbReference type="ChEBI" id="CHEBI:37565"/>
    </ligand>
</feature>
<feature type="binding site" evidence="2">
    <location>
        <begin position="121"/>
        <end position="124"/>
    </location>
    <ligand>
        <name>GTP</name>
        <dbReference type="ChEBI" id="CHEBI:37565"/>
    </ligand>
</feature>
<feature type="binding site" evidence="2">
    <location>
        <begin position="151"/>
        <end position="153"/>
    </location>
    <ligand>
        <name>GTP</name>
        <dbReference type="ChEBI" id="CHEBI:37565"/>
    </ligand>
</feature>
<feature type="lipid moiety-binding region" description="S-geranylgeranyl cysteine" evidence="1">
    <location>
        <position position="200"/>
    </location>
</feature>
<feature type="lipid moiety-binding region" description="S-geranylgeranyl cysteine" evidence="1">
    <location>
        <position position="201"/>
    </location>
</feature>
<feature type="mutagenesis site" description="Inhibits trafficking between the ER and Golgi." evidence="4">
    <original>N</original>
    <variation>I</variation>
    <location>
        <position position="121"/>
    </location>
</feature>
<dbReference type="EMBL" id="U89959">
    <property type="protein sequence ID" value="AAC24370.1"/>
    <property type="status" value="ALT_SEQ"/>
    <property type="molecule type" value="Genomic_DNA"/>
</dbReference>
<dbReference type="EMBL" id="CP002684">
    <property type="protein sequence ID" value="AEE27387.1"/>
    <property type="molecule type" value="Genomic_DNA"/>
</dbReference>
<dbReference type="EMBL" id="AY052333">
    <property type="protein sequence ID" value="AAK96526.1"/>
    <property type="molecule type" value="mRNA"/>
</dbReference>
<dbReference type="EMBL" id="AY061905">
    <property type="protein sequence ID" value="AAL31232.1"/>
    <property type="molecule type" value="mRNA"/>
</dbReference>
<dbReference type="EMBL" id="D01027">
    <property type="protein sequence ID" value="BAA00832.1"/>
    <property type="molecule type" value="mRNA"/>
</dbReference>
<dbReference type="PIR" id="B86153">
    <property type="entry name" value="B86153"/>
</dbReference>
<dbReference type="PIR" id="PS0279">
    <property type="entry name" value="PS0279"/>
</dbReference>
<dbReference type="RefSeq" id="NP_171715.1">
    <property type="nucleotide sequence ID" value="NM_100093.4"/>
</dbReference>
<dbReference type="SMR" id="P28188"/>
<dbReference type="BioGRID" id="22265">
    <property type="interactions" value="1"/>
</dbReference>
<dbReference type="FunCoup" id="P28188">
    <property type="interactions" value="4192"/>
</dbReference>
<dbReference type="IntAct" id="P28188">
    <property type="interactions" value="1"/>
</dbReference>
<dbReference type="MINT" id="P28188"/>
<dbReference type="STRING" id="3702.P28188"/>
<dbReference type="iPTMnet" id="P28188"/>
<dbReference type="PaxDb" id="3702-AT1G02130.1"/>
<dbReference type="ProteomicsDB" id="236700"/>
<dbReference type="EnsemblPlants" id="AT1G02130.1">
    <property type="protein sequence ID" value="AT1G02130.1"/>
    <property type="gene ID" value="AT1G02130"/>
</dbReference>
<dbReference type="GeneID" id="837023"/>
<dbReference type="Gramene" id="AT1G02130.1">
    <property type="protein sequence ID" value="AT1G02130.1"/>
    <property type="gene ID" value="AT1G02130"/>
</dbReference>
<dbReference type="KEGG" id="ath:AT1G02130"/>
<dbReference type="Araport" id="AT1G02130"/>
<dbReference type="TAIR" id="AT1G02130">
    <property type="gene designation" value="RA-5"/>
</dbReference>
<dbReference type="eggNOG" id="KOG0084">
    <property type="taxonomic scope" value="Eukaryota"/>
</dbReference>
<dbReference type="HOGENOM" id="CLU_041217_10_1_1"/>
<dbReference type="InParanoid" id="P28188"/>
<dbReference type="OMA" id="YHESRID"/>
<dbReference type="OrthoDB" id="9989112at2759"/>
<dbReference type="PhylomeDB" id="P28188"/>
<dbReference type="PRO" id="PR:P28188"/>
<dbReference type="Proteomes" id="UP000006548">
    <property type="component" value="Chromosome 1"/>
</dbReference>
<dbReference type="ExpressionAtlas" id="P28188">
    <property type="expression patterns" value="baseline and differential"/>
</dbReference>
<dbReference type="GO" id="GO:0005576">
    <property type="term" value="C:extracellular region"/>
    <property type="evidence" value="ECO:0007005"/>
    <property type="project" value="TAIR"/>
</dbReference>
<dbReference type="GO" id="GO:0000139">
    <property type="term" value="C:Golgi membrane"/>
    <property type="evidence" value="ECO:0000314"/>
    <property type="project" value="UniProtKB"/>
</dbReference>
<dbReference type="GO" id="GO:0000325">
    <property type="term" value="C:plant-type vacuole"/>
    <property type="evidence" value="ECO:0007005"/>
    <property type="project" value="TAIR"/>
</dbReference>
<dbReference type="GO" id="GO:0005886">
    <property type="term" value="C:plasma membrane"/>
    <property type="evidence" value="ECO:0007005"/>
    <property type="project" value="TAIR"/>
</dbReference>
<dbReference type="GO" id="GO:0032588">
    <property type="term" value="C:trans-Golgi network membrane"/>
    <property type="evidence" value="ECO:0000314"/>
    <property type="project" value="UniProtKB"/>
</dbReference>
<dbReference type="GO" id="GO:0005525">
    <property type="term" value="F:GTP binding"/>
    <property type="evidence" value="ECO:0007669"/>
    <property type="project" value="UniProtKB-KW"/>
</dbReference>
<dbReference type="GO" id="GO:0003924">
    <property type="term" value="F:GTPase activity"/>
    <property type="evidence" value="ECO:0007669"/>
    <property type="project" value="InterPro"/>
</dbReference>
<dbReference type="GO" id="GO:0006888">
    <property type="term" value="P:endoplasmic reticulum to Golgi vesicle-mediated transport"/>
    <property type="evidence" value="ECO:0000314"/>
    <property type="project" value="TAIR"/>
</dbReference>
<dbReference type="GO" id="GO:0015031">
    <property type="term" value="P:protein transport"/>
    <property type="evidence" value="ECO:0007669"/>
    <property type="project" value="UniProtKB-KW"/>
</dbReference>
<dbReference type="CDD" id="cd01869">
    <property type="entry name" value="Rab1_Ypt1"/>
    <property type="match status" value="1"/>
</dbReference>
<dbReference type="FunFam" id="3.40.50.300:FF:000359">
    <property type="entry name" value="Small GTP-binding protein"/>
    <property type="match status" value="1"/>
</dbReference>
<dbReference type="Gene3D" id="3.40.50.300">
    <property type="entry name" value="P-loop containing nucleotide triphosphate hydrolases"/>
    <property type="match status" value="1"/>
</dbReference>
<dbReference type="InterPro" id="IPR027417">
    <property type="entry name" value="P-loop_NTPase"/>
</dbReference>
<dbReference type="InterPro" id="IPR050227">
    <property type="entry name" value="Rab"/>
</dbReference>
<dbReference type="InterPro" id="IPR005225">
    <property type="entry name" value="Small_GTP-bd"/>
</dbReference>
<dbReference type="InterPro" id="IPR001806">
    <property type="entry name" value="Small_GTPase"/>
</dbReference>
<dbReference type="NCBIfam" id="TIGR00231">
    <property type="entry name" value="small_GTP"/>
    <property type="match status" value="1"/>
</dbReference>
<dbReference type="PANTHER" id="PTHR47977">
    <property type="entry name" value="RAS-RELATED PROTEIN RAB"/>
    <property type="match status" value="1"/>
</dbReference>
<dbReference type="Pfam" id="PF00071">
    <property type="entry name" value="Ras"/>
    <property type="match status" value="1"/>
</dbReference>
<dbReference type="PRINTS" id="PR00449">
    <property type="entry name" value="RASTRNSFRMNG"/>
</dbReference>
<dbReference type="SMART" id="SM00177">
    <property type="entry name" value="ARF"/>
    <property type="match status" value="1"/>
</dbReference>
<dbReference type="SMART" id="SM00175">
    <property type="entry name" value="RAB"/>
    <property type="match status" value="1"/>
</dbReference>
<dbReference type="SMART" id="SM00176">
    <property type="entry name" value="RAN"/>
    <property type="match status" value="1"/>
</dbReference>
<dbReference type="SMART" id="SM00173">
    <property type="entry name" value="RAS"/>
    <property type="match status" value="1"/>
</dbReference>
<dbReference type="SMART" id="SM00174">
    <property type="entry name" value="RHO"/>
    <property type="match status" value="1"/>
</dbReference>
<dbReference type="SUPFAM" id="SSF52540">
    <property type="entry name" value="P-loop containing nucleoside triphosphate hydrolases"/>
    <property type="match status" value="1"/>
</dbReference>
<dbReference type="PROSITE" id="PS51419">
    <property type="entry name" value="RAB"/>
    <property type="match status" value="1"/>
</dbReference>
<name>RAD2A_ARATH</name>